<proteinExistence type="inferred from homology"/>
<organism>
    <name type="scientific">Koribacter versatilis (strain Ellin345)</name>
    <dbReference type="NCBI Taxonomy" id="204669"/>
    <lineage>
        <taxon>Bacteria</taxon>
        <taxon>Pseudomonadati</taxon>
        <taxon>Acidobacteriota</taxon>
        <taxon>Terriglobia</taxon>
        <taxon>Terriglobales</taxon>
        <taxon>Candidatus Korobacteraceae</taxon>
        <taxon>Candidatus Korobacter</taxon>
    </lineage>
</organism>
<reference key="1">
    <citation type="journal article" date="2009" name="Appl. Environ. Microbiol.">
        <title>Three genomes from the phylum Acidobacteria provide insight into the lifestyles of these microorganisms in soils.</title>
        <authorList>
            <person name="Ward N.L."/>
            <person name="Challacombe J.F."/>
            <person name="Janssen P.H."/>
            <person name="Henrissat B."/>
            <person name="Coutinho P.M."/>
            <person name="Wu M."/>
            <person name="Xie G."/>
            <person name="Haft D.H."/>
            <person name="Sait M."/>
            <person name="Badger J."/>
            <person name="Barabote R.D."/>
            <person name="Bradley B."/>
            <person name="Brettin T.S."/>
            <person name="Brinkac L.M."/>
            <person name="Bruce D."/>
            <person name="Creasy T."/>
            <person name="Daugherty S.C."/>
            <person name="Davidsen T.M."/>
            <person name="DeBoy R.T."/>
            <person name="Detter J.C."/>
            <person name="Dodson R.J."/>
            <person name="Durkin A.S."/>
            <person name="Ganapathy A."/>
            <person name="Gwinn-Giglio M."/>
            <person name="Han C.S."/>
            <person name="Khouri H."/>
            <person name="Kiss H."/>
            <person name="Kothari S.P."/>
            <person name="Madupu R."/>
            <person name="Nelson K.E."/>
            <person name="Nelson W.C."/>
            <person name="Paulsen I."/>
            <person name="Penn K."/>
            <person name="Ren Q."/>
            <person name="Rosovitz M.J."/>
            <person name="Selengut J.D."/>
            <person name="Shrivastava S."/>
            <person name="Sullivan S.A."/>
            <person name="Tapia R."/>
            <person name="Thompson L.S."/>
            <person name="Watkins K.L."/>
            <person name="Yang Q."/>
            <person name="Yu C."/>
            <person name="Zafar N."/>
            <person name="Zhou L."/>
            <person name="Kuske C.R."/>
        </authorList>
    </citation>
    <scope>NUCLEOTIDE SEQUENCE [LARGE SCALE GENOMIC DNA]</scope>
    <source>
        <strain>Ellin345</strain>
    </source>
</reference>
<feature type="chain" id="PRO_1000076259" description="Histidine--tRNA ligase">
    <location>
        <begin position="1"/>
        <end position="441"/>
    </location>
</feature>
<accession>Q1ISE2</accession>
<gene>
    <name evidence="1" type="primary">hisS</name>
    <name type="ordered locus">Acid345_1205</name>
</gene>
<evidence type="ECO:0000255" key="1">
    <source>
        <dbReference type="HAMAP-Rule" id="MF_00127"/>
    </source>
</evidence>
<name>SYH_KORVE</name>
<sequence length="441" mass="48869">MIKAVRGTRDLLPPDTELWNRVEATVRDVFQRYNFHEIRTPIFEDTALFARGVGEETDIVSKEMFTWEDKARAQSEKSQQLTLRPENTAGVVRAYIEHQMAKSGGLQKLYYIGPQFRRERPQKGRYRQFFQIGAEVIGPPPSGSESPARDAEVIEMLATLLEEVGLTGWTLYLNSVGDANCRPAYNEALRQALASVKDKMCGDCQRRAETNPLRVLDCKVPEDQPIIETLPKIGDYLDDACKAHFAAVRAMLDKVGVPYTVNPRMVRGLDYYTRTTFEFTHGELGAQSAVLGGGRYDGLSEALDGPKAPGIGFAIGEDRLVMALQAAKPAEPMTIDAYVAPLGAGTNAEALGICRKLRRQGLRVELGDESFRLKKSFEAAERAGAKYIVICGENEVANNEFSVKELATGKQESVARAELAFYIRNHGARKTGGENIEPDEQ</sequence>
<protein>
    <recommendedName>
        <fullName evidence="1">Histidine--tRNA ligase</fullName>
        <ecNumber evidence="1">6.1.1.21</ecNumber>
    </recommendedName>
    <alternativeName>
        <fullName evidence="1">Histidyl-tRNA synthetase</fullName>
        <shortName evidence="1">HisRS</shortName>
    </alternativeName>
</protein>
<comment type="catalytic activity">
    <reaction evidence="1">
        <text>tRNA(His) + L-histidine + ATP = L-histidyl-tRNA(His) + AMP + diphosphate + H(+)</text>
        <dbReference type="Rhea" id="RHEA:17313"/>
        <dbReference type="Rhea" id="RHEA-COMP:9665"/>
        <dbReference type="Rhea" id="RHEA-COMP:9689"/>
        <dbReference type="ChEBI" id="CHEBI:15378"/>
        <dbReference type="ChEBI" id="CHEBI:30616"/>
        <dbReference type="ChEBI" id="CHEBI:33019"/>
        <dbReference type="ChEBI" id="CHEBI:57595"/>
        <dbReference type="ChEBI" id="CHEBI:78442"/>
        <dbReference type="ChEBI" id="CHEBI:78527"/>
        <dbReference type="ChEBI" id="CHEBI:456215"/>
        <dbReference type="EC" id="6.1.1.21"/>
    </reaction>
</comment>
<comment type="subunit">
    <text evidence="1">Homodimer.</text>
</comment>
<comment type="subcellular location">
    <subcellularLocation>
        <location evidence="1">Cytoplasm</location>
    </subcellularLocation>
</comment>
<comment type="similarity">
    <text evidence="1">Belongs to the class-II aminoacyl-tRNA synthetase family.</text>
</comment>
<keyword id="KW-0030">Aminoacyl-tRNA synthetase</keyword>
<keyword id="KW-0067">ATP-binding</keyword>
<keyword id="KW-0963">Cytoplasm</keyword>
<keyword id="KW-0436">Ligase</keyword>
<keyword id="KW-0547">Nucleotide-binding</keyword>
<keyword id="KW-0648">Protein biosynthesis</keyword>
<keyword id="KW-1185">Reference proteome</keyword>
<dbReference type="EC" id="6.1.1.21" evidence="1"/>
<dbReference type="EMBL" id="CP000360">
    <property type="protein sequence ID" value="ABF40208.1"/>
    <property type="molecule type" value="Genomic_DNA"/>
</dbReference>
<dbReference type="RefSeq" id="WP_011522010.1">
    <property type="nucleotide sequence ID" value="NC_008009.1"/>
</dbReference>
<dbReference type="SMR" id="Q1ISE2"/>
<dbReference type="STRING" id="204669.Acid345_1205"/>
<dbReference type="EnsemblBacteria" id="ABF40208">
    <property type="protein sequence ID" value="ABF40208"/>
    <property type="gene ID" value="Acid345_1205"/>
</dbReference>
<dbReference type="KEGG" id="aba:Acid345_1205"/>
<dbReference type="eggNOG" id="COG0124">
    <property type="taxonomic scope" value="Bacteria"/>
</dbReference>
<dbReference type="HOGENOM" id="CLU_025113_1_1_0"/>
<dbReference type="OrthoDB" id="9800814at2"/>
<dbReference type="Proteomes" id="UP000002432">
    <property type="component" value="Chromosome"/>
</dbReference>
<dbReference type="GO" id="GO:0005737">
    <property type="term" value="C:cytoplasm"/>
    <property type="evidence" value="ECO:0007669"/>
    <property type="project" value="UniProtKB-SubCell"/>
</dbReference>
<dbReference type="GO" id="GO:0005524">
    <property type="term" value="F:ATP binding"/>
    <property type="evidence" value="ECO:0007669"/>
    <property type="project" value="UniProtKB-UniRule"/>
</dbReference>
<dbReference type="GO" id="GO:0004821">
    <property type="term" value="F:histidine-tRNA ligase activity"/>
    <property type="evidence" value="ECO:0007669"/>
    <property type="project" value="UniProtKB-UniRule"/>
</dbReference>
<dbReference type="GO" id="GO:0006427">
    <property type="term" value="P:histidyl-tRNA aminoacylation"/>
    <property type="evidence" value="ECO:0007669"/>
    <property type="project" value="UniProtKB-UniRule"/>
</dbReference>
<dbReference type="CDD" id="cd00773">
    <property type="entry name" value="HisRS-like_core"/>
    <property type="match status" value="1"/>
</dbReference>
<dbReference type="CDD" id="cd00859">
    <property type="entry name" value="HisRS_anticodon"/>
    <property type="match status" value="1"/>
</dbReference>
<dbReference type="Gene3D" id="3.40.50.800">
    <property type="entry name" value="Anticodon-binding domain"/>
    <property type="match status" value="1"/>
</dbReference>
<dbReference type="Gene3D" id="3.30.930.10">
    <property type="entry name" value="Bira Bifunctional Protein, Domain 2"/>
    <property type="match status" value="1"/>
</dbReference>
<dbReference type="HAMAP" id="MF_00127">
    <property type="entry name" value="His_tRNA_synth"/>
    <property type="match status" value="1"/>
</dbReference>
<dbReference type="InterPro" id="IPR006195">
    <property type="entry name" value="aa-tRNA-synth_II"/>
</dbReference>
<dbReference type="InterPro" id="IPR045864">
    <property type="entry name" value="aa-tRNA-synth_II/BPL/LPL"/>
</dbReference>
<dbReference type="InterPro" id="IPR004154">
    <property type="entry name" value="Anticodon-bd"/>
</dbReference>
<dbReference type="InterPro" id="IPR036621">
    <property type="entry name" value="Anticodon-bd_dom_sf"/>
</dbReference>
<dbReference type="InterPro" id="IPR015807">
    <property type="entry name" value="His-tRNA-ligase"/>
</dbReference>
<dbReference type="InterPro" id="IPR041715">
    <property type="entry name" value="HisRS-like_core"/>
</dbReference>
<dbReference type="InterPro" id="IPR004516">
    <property type="entry name" value="HisRS/HisZ"/>
</dbReference>
<dbReference type="InterPro" id="IPR033656">
    <property type="entry name" value="HisRS_anticodon"/>
</dbReference>
<dbReference type="NCBIfam" id="TIGR00442">
    <property type="entry name" value="hisS"/>
    <property type="match status" value="1"/>
</dbReference>
<dbReference type="PANTHER" id="PTHR43707:SF1">
    <property type="entry name" value="HISTIDINE--TRNA LIGASE, MITOCHONDRIAL-RELATED"/>
    <property type="match status" value="1"/>
</dbReference>
<dbReference type="PANTHER" id="PTHR43707">
    <property type="entry name" value="HISTIDYL-TRNA SYNTHETASE"/>
    <property type="match status" value="1"/>
</dbReference>
<dbReference type="Pfam" id="PF03129">
    <property type="entry name" value="HGTP_anticodon"/>
    <property type="match status" value="1"/>
</dbReference>
<dbReference type="Pfam" id="PF13393">
    <property type="entry name" value="tRNA-synt_His"/>
    <property type="match status" value="1"/>
</dbReference>
<dbReference type="PIRSF" id="PIRSF001549">
    <property type="entry name" value="His-tRNA_synth"/>
    <property type="match status" value="1"/>
</dbReference>
<dbReference type="SUPFAM" id="SSF52954">
    <property type="entry name" value="Class II aaRS ABD-related"/>
    <property type="match status" value="1"/>
</dbReference>
<dbReference type="SUPFAM" id="SSF55681">
    <property type="entry name" value="Class II aaRS and biotin synthetases"/>
    <property type="match status" value="1"/>
</dbReference>
<dbReference type="PROSITE" id="PS50862">
    <property type="entry name" value="AA_TRNA_LIGASE_II"/>
    <property type="match status" value="1"/>
</dbReference>